<organism>
    <name type="scientific">Caenorhabditis briggsae</name>
    <dbReference type="NCBI Taxonomy" id="6238"/>
    <lineage>
        <taxon>Eukaryota</taxon>
        <taxon>Metazoa</taxon>
        <taxon>Ecdysozoa</taxon>
        <taxon>Nematoda</taxon>
        <taxon>Chromadorea</taxon>
        <taxon>Rhabditida</taxon>
        <taxon>Rhabditina</taxon>
        <taxon>Rhabditomorpha</taxon>
        <taxon>Rhabditoidea</taxon>
        <taxon>Rhabditidae</taxon>
        <taxon>Peloderinae</taxon>
        <taxon>Caenorhabditis</taxon>
    </lineage>
</organism>
<reference key="1">
    <citation type="journal article" date="2003" name="PLoS Biol.">
        <title>The genome sequence of Caenorhabditis briggsae: a platform for comparative genomics.</title>
        <authorList>
            <person name="Stein L.D."/>
            <person name="Bao Z."/>
            <person name="Blasiar D."/>
            <person name="Blumenthal T."/>
            <person name="Brent M.R."/>
            <person name="Chen N."/>
            <person name="Chinwalla A."/>
            <person name="Clarke L."/>
            <person name="Clee C."/>
            <person name="Coghlan A."/>
            <person name="Coulson A."/>
            <person name="D'Eustachio P."/>
            <person name="Fitch D.H.A."/>
            <person name="Fulton L.A."/>
            <person name="Fulton R.E."/>
            <person name="Griffiths-Jones S."/>
            <person name="Harris T.W."/>
            <person name="Hillier L.W."/>
            <person name="Kamath R."/>
            <person name="Kuwabara P.E."/>
            <person name="Mardis E.R."/>
            <person name="Marra M.A."/>
            <person name="Miner T.L."/>
            <person name="Minx P."/>
            <person name="Mullikin J.C."/>
            <person name="Plumb R.W."/>
            <person name="Rogers J."/>
            <person name="Schein J.E."/>
            <person name="Sohrmann M."/>
            <person name="Spieth J."/>
            <person name="Stajich J.E."/>
            <person name="Wei C."/>
            <person name="Willey D."/>
            <person name="Wilson R.K."/>
            <person name="Durbin R.M."/>
            <person name="Waterston R.H."/>
        </authorList>
    </citation>
    <scope>NUCLEOTIDE SEQUENCE [LARGE SCALE GENOMIC DNA]</scope>
    <source>
        <strain>AF16</strain>
    </source>
</reference>
<keyword id="KW-0010">Activator</keyword>
<keyword id="KW-0539">Nucleus</keyword>
<keyword id="KW-1185">Reference proteome</keyword>
<keyword id="KW-0804">Transcription</keyword>
<keyword id="KW-0805">Transcription regulation</keyword>
<name>MED21_CAEBR</name>
<protein>
    <recommendedName>
        <fullName>Mediator of RNA polymerase II transcription subunit 21</fullName>
    </recommendedName>
    <alternativeName>
        <fullName>Mediator complex subunit 21</fullName>
    </alternativeName>
</protein>
<dbReference type="EMBL" id="HE601226">
    <property type="protein sequence ID" value="CAP32043.2"/>
    <property type="molecule type" value="Genomic_DNA"/>
</dbReference>
<dbReference type="SMR" id="Q61BU1"/>
<dbReference type="FunCoup" id="Q61BU1">
    <property type="interactions" value="1950"/>
</dbReference>
<dbReference type="STRING" id="6238.Q61BU1"/>
<dbReference type="EnsemblMetazoa" id="CBG13222.1">
    <property type="protein sequence ID" value="CBG13222.1"/>
    <property type="gene ID" value="WBGene00034013"/>
</dbReference>
<dbReference type="WormBase" id="CBG13222">
    <property type="protein sequence ID" value="CBP35105"/>
    <property type="gene ID" value="WBGene00034013"/>
    <property type="gene designation" value="Cbr-mdt-21"/>
</dbReference>
<dbReference type="eggNOG" id="KOG1510">
    <property type="taxonomic scope" value="Eukaryota"/>
</dbReference>
<dbReference type="HOGENOM" id="CLU_126757_0_0_1"/>
<dbReference type="InParanoid" id="Q61BU1"/>
<dbReference type="OMA" id="DSFPIEA"/>
<dbReference type="OrthoDB" id="526653at2759"/>
<dbReference type="Proteomes" id="UP000008549">
    <property type="component" value="Unassembled WGS sequence"/>
</dbReference>
<dbReference type="GO" id="GO:0016592">
    <property type="term" value="C:mediator complex"/>
    <property type="evidence" value="ECO:0000318"/>
    <property type="project" value="GO_Central"/>
</dbReference>
<dbReference type="GO" id="GO:0003712">
    <property type="term" value="F:transcription coregulator activity"/>
    <property type="evidence" value="ECO:0000318"/>
    <property type="project" value="GO_Central"/>
</dbReference>
<dbReference type="GO" id="GO:0006357">
    <property type="term" value="P:regulation of transcription by RNA polymerase II"/>
    <property type="evidence" value="ECO:0000318"/>
    <property type="project" value="GO_Central"/>
</dbReference>
<dbReference type="Gene3D" id="6.10.280.10">
    <property type="entry name" value="Mediator complex, subunit Med21"/>
    <property type="match status" value="1"/>
</dbReference>
<dbReference type="InterPro" id="IPR037212">
    <property type="entry name" value="Med7/Med21-like"/>
</dbReference>
<dbReference type="InterPro" id="IPR021384">
    <property type="entry name" value="Mediator_Med21"/>
</dbReference>
<dbReference type="PANTHER" id="PTHR13381:SF0">
    <property type="entry name" value="MEDIATOR OF RNA POLYMERASE II TRANSCRIPTION SUBUNIT 21"/>
    <property type="match status" value="1"/>
</dbReference>
<dbReference type="PANTHER" id="PTHR13381">
    <property type="entry name" value="RNA POLYMERASE II HOLOENZYME COMPONENT SRB7"/>
    <property type="match status" value="1"/>
</dbReference>
<dbReference type="SUPFAM" id="SSF140718">
    <property type="entry name" value="Mediator hinge subcomplex-like"/>
    <property type="match status" value="1"/>
</dbReference>
<feature type="chain" id="PRO_0000305950" description="Mediator of RNA polymerase II transcription subunit 21">
    <location>
        <begin position="1"/>
        <end position="130"/>
    </location>
</feature>
<sequence length="130" mass="14313">MADRMTQLQDMINEMASLMTNAIGVLQATAPPCEFDAISQDHEEEPNCAIFAASIAKSAKNIEILIDSFPIEAGNMEDEVEQKMIQNDAVQREKVGELKELVGESTQLVSAVQKKLSEISRVQMSSRPSE</sequence>
<evidence type="ECO:0000250" key="1"/>
<evidence type="ECO:0000305" key="2"/>
<gene>
    <name type="primary">mdt-21</name>
    <name type="ORF">CBG13222</name>
</gene>
<proteinExistence type="inferred from homology"/>
<accession>Q61BU1</accession>
<accession>A8XHB9</accession>
<comment type="function">
    <text evidence="1">Component of the Mediator complex, a coactivator involved in the regulated transcription of nearly all RNA polymerase II-dependent genes. Mediator functions as a bridge to convey information from gene-specific regulatory proteins to the basal RNA polymerase II transcription machinery. Mediator is recruited to promoters by direct interactions with regulatory proteins and serves as a scaffold for the assembly of a functional preinitiation complex with RNA polymerase II and the general transcription factors (By similarity).</text>
</comment>
<comment type="subunit">
    <text evidence="1">Component of the Mediator complex.</text>
</comment>
<comment type="subcellular location">
    <subcellularLocation>
        <location evidence="2">Nucleus</location>
    </subcellularLocation>
</comment>
<comment type="similarity">
    <text evidence="2">Belongs to the Mediator complex subunit 21 family.</text>
</comment>